<comment type="function">
    <text evidence="1">Deacetylates O-acetyl-ADP ribose to yield ADP-ribose and free acetate. Down-regulates ribonuclease 3 (RNase III) activity. Acts by interacting directly with the region of the ribonuclease that is required for dimerization/activation.</text>
</comment>
<comment type="catalytic activity">
    <reaction evidence="1">
        <text>3''-O-acetyl-ADP-D-ribose + H2O = ADP-D-ribose + acetate + H(+)</text>
        <dbReference type="Rhea" id="RHEA:59244"/>
        <dbReference type="ChEBI" id="CHEBI:15377"/>
        <dbReference type="ChEBI" id="CHEBI:15378"/>
        <dbReference type="ChEBI" id="CHEBI:30089"/>
        <dbReference type="ChEBI" id="CHEBI:57967"/>
        <dbReference type="ChEBI" id="CHEBI:142723"/>
        <dbReference type="EC" id="3.1.1.106"/>
    </reaction>
</comment>
<comment type="catalytic activity">
    <reaction evidence="1">
        <text>2''-O-acetyl-ADP-D-ribose + H2O = ADP-D-ribose + acetate + H(+)</text>
        <dbReference type="Rhea" id="RHEA:57060"/>
        <dbReference type="ChEBI" id="CHEBI:15377"/>
        <dbReference type="ChEBI" id="CHEBI:15378"/>
        <dbReference type="ChEBI" id="CHEBI:30089"/>
        <dbReference type="ChEBI" id="CHEBI:57967"/>
        <dbReference type="ChEBI" id="CHEBI:83767"/>
        <dbReference type="EC" id="3.1.1.106"/>
    </reaction>
</comment>
<comment type="subunit">
    <text evidence="1">Homodimer. Interacts with RNase III.</text>
</comment>
<comment type="similarity">
    <text evidence="1">Belongs to the MacroD-type family. YmdB subfamily.</text>
</comment>
<comment type="sequence caution" evidence="2">
    <conflict type="erroneous initiation">
        <sequence resource="EMBL-CDS" id="CBG87876"/>
    </conflict>
    <text>Extended N-terminus.</text>
</comment>
<sequence length="177" mass="18932">MNSRIHVIHGDITTVAVDAIVNAANPSLMGGGGVDGAIHRAAGPELLEACMTVRRQQGECPPGHAVITAAGRLPAKAVIHTVGPIWRGGEHNEAQLLHDAYLNSLNLALANGYQSIAFPAISTGVYGYPRAAAAEIAVNTISEFITRRASPEQIYFVCYDEETTRLYQRLLTQQGDQ</sequence>
<reference key="1">
    <citation type="journal article" date="2010" name="J. Bacteriol.">
        <title>The Citrobacter rodentium genome sequence reveals convergent evolution with human pathogenic Escherichia coli.</title>
        <authorList>
            <person name="Petty N.K."/>
            <person name="Bulgin R."/>
            <person name="Crepin V.F."/>
            <person name="Cerdeno-Tarraga A.M."/>
            <person name="Schroeder G.N."/>
            <person name="Quail M.A."/>
            <person name="Lennard N."/>
            <person name="Corton C."/>
            <person name="Barron A."/>
            <person name="Clark L."/>
            <person name="Toribio A.L."/>
            <person name="Parkhill J."/>
            <person name="Dougan G."/>
            <person name="Frankel G."/>
            <person name="Thomson N.R."/>
        </authorList>
    </citation>
    <scope>NUCLEOTIDE SEQUENCE [LARGE SCALE GENOMIC DNA]</scope>
    <source>
        <strain>ICC168</strain>
    </source>
</reference>
<evidence type="ECO:0000255" key="1">
    <source>
        <dbReference type="HAMAP-Rule" id="MF_01205"/>
    </source>
</evidence>
<evidence type="ECO:0000305" key="2"/>
<keyword id="KW-0378">Hydrolase</keyword>
<keyword id="KW-1185">Reference proteome</keyword>
<proteinExistence type="inferred from homology"/>
<gene>
    <name evidence="1" type="primary">ymdB</name>
    <name type="ordered locus">ROD_11041</name>
</gene>
<name>YMDB_CITRI</name>
<feature type="chain" id="PRO_0000409473" description="O-acetyl-ADP-ribose deacetylase">
    <location>
        <begin position="1"/>
        <end position="177"/>
    </location>
</feature>
<feature type="domain" description="Macro" evidence="1">
    <location>
        <begin position="1"/>
        <end position="175"/>
    </location>
</feature>
<feature type="active site" description="Proton acceptor" evidence="1">
    <location>
        <position position="35"/>
    </location>
</feature>
<feature type="binding site" evidence="1">
    <location>
        <begin position="11"/>
        <end position="12"/>
    </location>
    <ligand>
        <name>substrate</name>
    </ligand>
</feature>
<feature type="binding site" evidence="1">
    <location>
        <position position="25"/>
    </location>
    <ligand>
        <name>substrate</name>
    </ligand>
</feature>
<feature type="binding site" evidence="1">
    <location>
        <begin position="33"/>
        <end position="35"/>
    </location>
    <ligand>
        <name>substrate</name>
    </ligand>
</feature>
<feature type="binding site" evidence="1">
    <location>
        <begin position="122"/>
        <end position="126"/>
    </location>
    <ligand>
        <name>substrate</name>
    </ligand>
</feature>
<accession>D2TT52</accession>
<dbReference type="EC" id="3.1.1.106" evidence="1"/>
<dbReference type="EMBL" id="FN543502">
    <property type="protein sequence ID" value="CBG87876.1"/>
    <property type="status" value="ALT_INIT"/>
    <property type="molecule type" value="Genomic_DNA"/>
</dbReference>
<dbReference type="RefSeq" id="WP_024132603.1">
    <property type="nucleotide sequence ID" value="NC_013716.1"/>
</dbReference>
<dbReference type="SMR" id="D2TT52"/>
<dbReference type="STRING" id="637910.ROD_11041"/>
<dbReference type="KEGG" id="cro:ROD_11041"/>
<dbReference type="eggNOG" id="COG2110">
    <property type="taxonomic scope" value="Bacteria"/>
</dbReference>
<dbReference type="HOGENOM" id="CLU_046550_5_1_6"/>
<dbReference type="OrthoDB" id="6194521at2"/>
<dbReference type="Proteomes" id="UP000001889">
    <property type="component" value="Chromosome"/>
</dbReference>
<dbReference type="GO" id="GO:0061463">
    <property type="term" value="F:O-acetyl-ADP-ribose deacetylase activity"/>
    <property type="evidence" value="ECO:0007669"/>
    <property type="project" value="UniProtKB-EC"/>
</dbReference>
<dbReference type="GO" id="GO:0001883">
    <property type="term" value="F:purine nucleoside binding"/>
    <property type="evidence" value="ECO:0007669"/>
    <property type="project" value="UniProtKB-UniRule"/>
</dbReference>
<dbReference type="GO" id="GO:0008428">
    <property type="term" value="F:ribonuclease inhibitor activity"/>
    <property type="evidence" value="ECO:0007669"/>
    <property type="project" value="UniProtKB-UniRule"/>
</dbReference>
<dbReference type="GO" id="GO:0042278">
    <property type="term" value="P:purine nucleoside metabolic process"/>
    <property type="evidence" value="ECO:0007669"/>
    <property type="project" value="UniProtKB-UniRule"/>
</dbReference>
<dbReference type="CDD" id="cd02908">
    <property type="entry name" value="Macro_OAADPr_deacetylase"/>
    <property type="match status" value="1"/>
</dbReference>
<dbReference type="Gene3D" id="3.40.220.10">
    <property type="entry name" value="Leucine Aminopeptidase, subunit E, domain 1"/>
    <property type="match status" value="1"/>
</dbReference>
<dbReference type="HAMAP" id="MF_01205">
    <property type="entry name" value="YmdB"/>
    <property type="match status" value="1"/>
</dbReference>
<dbReference type="InterPro" id="IPR002589">
    <property type="entry name" value="Macro_dom"/>
</dbReference>
<dbReference type="InterPro" id="IPR043472">
    <property type="entry name" value="Macro_dom-like"/>
</dbReference>
<dbReference type="InterPro" id="IPR024900">
    <property type="entry name" value="O-Ac-ADP-ribose_deAcase"/>
</dbReference>
<dbReference type="NCBIfam" id="NF001660">
    <property type="entry name" value="PRK00431.1-1"/>
    <property type="match status" value="1"/>
</dbReference>
<dbReference type="NCBIfam" id="NF001664">
    <property type="entry name" value="PRK00431.1-6"/>
    <property type="match status" value="1"/>
</dbReference>
<dbReference type="PANTHER" id="PTHR11106">
    <property type="entry name" value="GANGLIOSIDE INDUCED DIFFERENTIATION ASSOCIATED PROTEIN 2-RELATED"/>
    <property type="match status" value="1"/>
</dbReference>
<dbReference type="PANTHER" id="PTHR11106:SF27">
    <property type="entry name" value="MACRO DOMAIN-CONTAINING PROTEIN"/>
    <property type="match status" value="1"/>
</dbReference>
<dbReference type="Pfam" id="PF01661">
    <property type="entry name" value="Macro"/>
    <property type="match status" value="1"/>
</dbReference>
<dbReference type="SMART" id="SM00506">
    <property type="entry name" value="A1pp"/>
    <property type="match status" value="1"/>
</dbReference>
<dbReference type="SUPFAM" id="SSF52949">
    <property type="entry name" value="Macro domain-like"/>
    <property type="match status" value="1"/>
</dbReference>
<dbReference type="PROSITE" id="PS51154">
    <property type="entry name" value="MACRO"/>
    <property type="match status" value="1"/>
</dbReference>
<protein>
    <recommendedName>
        <fullName evidence="1">O-acetyl-ADP-ribose deacetylase</fullName>
        <ecNumber evidence="1">3.1.1.106</ecNumber>
    </recommendedName>
    <alternativeName>
        <fullName evidence="1">Regulator of RNase III activity</fullName>
    </alternativeName>
</protein>
<organism>
    <name type="scientific">Citrobacter rodentium (strain ICC168)</name>
    <name type="common">Citrobacter freundii biotype 4280</name>
    <dbReference type="NCBI Taxonomy" id="637910"/>
    <lineage>
        <taxon>Bacteria</taxon>
        <taxon>Pseudomonadati</taxon>
        <taxon>Pseudomonadota</taxon>
        <taxon>Gammaproteobacteria</taxon>
        <taxon>Enterobacterales</taxon>
        <taxon>Enterobacteriaceae</taxon>
        <taxon>Citrobacter</taxon>
    </lineage>
</organism>